<name>PURR_VIBC1</name>
<comment type="function">
    <text evidence="1">Is the main repressor of the genes involved in the de novo synthesis of purine nucleotides, regulating purB, purC, purEK, purF, purHD, purL, purMN and guaBA expression. PurR is allosterically activated to bind its cognate DNA by binding the purine corepressors, hypoxanthine or guanine, thereby effecting transcription repression.</text>
</comment>
<comment type="pathway">
    <text>Purine metabolism; purine nucleotide biosynthesis [regulation].</text>
</comment>
<comment type="subunit">
    <text evidence="1">Homodimer.</text>
</comment>
<comment type="domain">
    <text evidence="1">Consists of two structural and functional domains: an N-terminal DNA-binding domain, approximately the first 60 residues, and a larger C-terminal domain, approximately 280 residues, which imparts the function of corepressor binding and oligomerization.</text>
</comment>
<protein>
    <recommendedName>
        <fullName evidence="1">HTH-type transcriptional repressor PurR</fullName>
    </recommendedName>
    <alternativeName>
        <fullName evidence="1">Pur regulon repressor</fullName>
    </alternativeName>
    <alternativeName>
        <fullName evidence="1">Purine nucleotide synthesis repressor</fullName>
    </alternativeName>
</protein>
<sequence length="334" mass="37540">MATIKDVARLAGVSTTTVSHVINKTRFVAETTQEKVMKAVDELNYAPSAVARSLKCNSTRTIGMLVTQSTNLFFSEVIDGVESYCYRQGYTLILCNTGGIYEKQRDYIRMLAEKRVDGILVMCSDLTEELKEMLDRHSDIPKVVMDWGPESSQADKIIDNSEEGGYIATKYLIDNGHTDIACLSGHFEKAACQERIAGYRRAMAEANLAVNEDWVLEGNFECDTAVLAADNITAMEKRPTAVFCFNDTMALGLMSRLQQNGLKVPDDISVIGYDNIELAEYFSPPLTTIHQPKRRVGKNAFEILLERIKDKEHEKRVFEMQPEIVVRNTVKKLN</sequence>
<evidence type="ECO:0000255" key="1">
    <source>
        <dbReference type="HAMAP-Rule" id="MF_01277"/>
    </source>
</evidence>
<organism>
    <name type="scientific">Vibrio campbellii (strain ATCC BAA-1116)</name>
    <dbReference type="NCBI Taxonomy" id="2902295"/>
    <lineage>
        <taxon>Bacteria</taxon>
        <taxon>Pseudomonadati</taxon>
        <taxon>Pseudomonadota</taxon>
        <taxon>Gammaproteobacteria</taxon>
        <taxon>Vibrionales</taxon>
        <taxon>Vibrionaceae</taxon>
        <taxon>Vibrio</taxon>
    </lineage>
</organism>
<keyword id="KW-0238">DNA-binding</keyword>
<keyword id="KW-0658">Purine biosynthesis</keyword>
<keyword id="KW-0678">Repressor</keyword>
<keyword id="KW-0804">Transcription</keyword>
<keyword id="KW-0805">Transcription regulation</keyword>
<reference key="1">
    <citation type="submission" date="2007-08" db="EMBL/GenBank/DDBJ databases">
        <authorList>
            <consortium name="The Vibrio harveyi Genome Sequencing Project"/>
            <person name="Bassler B."/>
            <person name="Clifton S.W."/>
            <person name="Fulton L."/>
            <person name="Delehaunty K."/>
            <person name="Fronick C."/>
            <person name="Harrison M."/>
            <person name="Markivic C."/>
            <person name="Fulton R."/>
            <person name="Tin-Wollam A.-M."/>
            <person name="Shah N."/>
            <person name="Pepin K."/>
            <person name="Nash W."/>
            <person name="Thiruvilangam P."/>
            <person name="Bhonagiri V."/>
            <person name="Waters C."/>
            <person name="Tu K.C."/>
            <person name="Irgon J."/>
            <person name="Wilson R.K."/>
        </authorList>
    </citation>
    <scope>NUCLEOTIDE SEQUENCE [LARGE SCALE GENOMIC DNA]</scope>
    <source>
        <strain>ATCC BAA-1116 / BB120</strain>
    </source>
</reference>
<accession>A7N1L2</accession>
<gene>
    <name evidence="1" type="primary">purR</name>
    <name type="ordered locus">VIBHAR_01581</name>
</gene>
<feature type="chain" id="PRO_1000085879" description="HTH-type transcriptional repressor PurR">
    <location>
        <begin position="1"/>
        <end position="334"/>
    </location>
</feature>
<feature type="domain" description="HTH lacI-type" evidence="1">
    <location>
        <begin position="2"/>
        <end position="56"/>
    </location>
</feature>
<feature type="DNA-binding region" description="H-T-H motif" evidence="1">
    <location>
        <begin position="4"/>
        <end position="23"/>
    </location>
</feature>
<feature type="DNA-binding region" evidence="1">
    <location>
        <begin position="48"/>
        <end position="56"/>
    </location>
</feature>
<feature type="binding site" evidence="1">
    <location>
        <position position="73"/>
    </location>
    <ligand>
        <name>hypoxanthine</name>
        <dbReference type="ChEBI" id="CHEBI:17368"/>
    </ligand>
</feature>
<feature type="binding site" evidence="1">
    <location>
        <position position="189"/>
    </location>
    <ligand>
        <name>hypoxanthine</name>
        <dbReference type="ChEBI" id="CHEBI:17368"/>
    </ligand>
</feature>
<feature type="binding site" evidence="1">
    <location>
        <position position="220"/>
    </location>
    <ligand>
        <name>hypoxanthine</name>
        <dbReference type="ChEBI" id="CHEBI:17368"/>
    </ligand>
</feature>
<feature type="binding site" evidence="1">
    <location>
        <position position="274"/>
    </location>
    <ligand>
        <name>hypoxanthine</name>
        <dbReference type="ChEBI" id="CHEBI:17368"/>
    </ligand>
</feature>
<dbReference type="EMBL" id="CP000789">
    <property type="protein sequence ID" value="ABU70551.1"/>
    <property type="molecule type" value="Genomic_DNA"/>
</dbReference>
<dbReference type="RefSeq" id="WP_012127434.1">
    <property type="nucleotide sequence ID" value="NC_009783.1"/>
</dbReference>
<dbReference type="SMR" id="A7N1L2"/>
<dbReference type="KEGG" id="vha:VIBHAR_01581"/>
<dbReference type="PATRIC" id="fig|338187.25.peg.1081"/>
<dbReference type="UniPathway" id="UPA00488"/>
<dbReference type="Proteomes" id="UP000008152">
    <property type="component" value="Chromosome I"/>
</dbReference>
<dbReference type="GO" id="GO:0003700">
    <property type="term" value="F:DNA-binding transcription factor activity"/>
    <property type="evidence" value="ECO:0007669"/>
    <property type="project" value="TreeGrafter"/>
</dbReference>
<dbReference type="GO" id="GO:0000976">
    <property type="term" value="F:transcription cis-regulatory region binding"/>
    <property type="evidence" value="ECO:0007669"/>
    <property type="project" value="TreeGrafter"/>
</dbReference>
<dbReference type="GO" id="GO:0045892">
    <property type="term" value="P:negative regulation of DNA-templated transcription"/>
    <property type="evidence" value="ECO:0007669"/>
    <property type="project" value="UniProtKB-UniRule"/>
</dbReference>
<dbReference type="GO" id="GO:0006164">
    <property type="term" value="P:purine nucleotide biosynthetic process"/>
    <property type="evidence" value="ECO:0007669"/>
    <property type="project" value="UniProtKB-UniPathway"/>
</dbReference>
<dbReference type="CDD" id="cd01392">
    <property type="entry name" value="HTH_LacI"/>
    <property type="match status" value="1"/>
</dbReference>
<dbReference type="CDD" id="cd06275">
    <property type="entry name" value="PBP1_PurR"/>
    <property type="match status" value="1"/>
</dbReference>
<dbReference type="FunFam" id="1.10.260.40:FF:000002">
    <property type="entry name" value="HTH-type transcriptional repressor PurR"/>
    <property type="match status" value="1"/>
</dbReference>
<dbReference type="Gene3D" id="3.40.50.2300">
    <property type="match status" value="2"/>
</dbReference>
<dbReference type="Gene3D" id="1.10.260.40">
    <property type="entry name" value="lambda repressor-like DNA-binding domains"/>
    <property type="match status" value="1"/>
</dbReference>
<dbReference type="HAMAP" id="MF_01277">
    <property type="entry name" value="HTH_type_PurR"/>
    <property type="match status" value="1"/>
</dbReference>
<dbReference type="InterPro" id="IPR000843">
    <property type="entry name" value="HTH_LacI"/>
</dbReference>
<dbReference type="InterPro" id="IPR046335">
    <property type="entry name" value="LacI/GalR-like_sensor"/>
</dbReference>
<dbReference type="InterPro" id="IPR010982">
    <property type="entry name" value="Lambda_DNA-bd_dom_sf"/>
</dbReference>
<dbReference type="InterPro" id="IPR028082">
    <property type="entry name" value="Peripla_BP_I"/>
</dbReference>
<dbReference type="InterPro" id="IPR023588">
    <property type="entry name" value="Tscrpt_reg_HTH_PurR"/>
</dbReference>
<dbReference type="PANTHER" id="PTHR30146:SF148">
    <property type="entry name" value="HTH-TYPE TRANSCRIPTIONAL REPRESSOR PURR-RELATED"/>
    <property type="match status" value="1"/>
</dbReference>
<dbReference type="PANTHER" id="PTHR30146">
    <property type="entry name" value="LACI-RELATED TRANSCRIPTIONAL REPRESSOR"/>
    <property type="match status" value="1"/>
</dbReference>
<dbReference type="Pfam" id="PF00356">
    <property type="entry name" value="LacI"/>
    <property type="match status" value="1"/>
</dbReference>
<dbReference type="Pfam" id="PF13377">
    <property type="entry name" value="Peripla_BP_3"/>
    <property type="match status" value="1"/>
</dbReference>
<dbReference type="PRINTS" id="PR00036">
    <property type="entry name" value="HTHLACI"/>
</dbReference>
<dbReference type="SMART" id="SM00354">
    <property type="entry name" value="HTH_LACI"/>
    <property type="match status" value="1"/>
</dbReference>
<dbReference type="SUPFAM" id="SSF47413">
    <property type="entry name" value="lambda repressor-like DNA-binding domains"/>
    <property type="match status" value="1"/>
</dbReference>
<dbReference type="SUPFAM" id="SSF53822">
    <property type="entry name" value="Periplasmic binding protein-like I"/>
    <property type="match status" value="1"/>
</dbReference>
<dbReference type="PROSITE" id="PS00356">
    <property type="entry name" value="HTH_LACI_1"/>
    <property type="match status" value="1"/>
</dbReference>
<dbReference type="PROSITE" id="PS50932">
    <property type="entry name" value="HTH_LACI_2"/>
    <property type="match status" value="1"/>
</dbReference>
<proteinExistence type="inferred from homology"/>